<comment type="function">
    <text evidence="1">One of the primary rRNA binding proteins, it binds directly to 16S rRNA where it nucleates assembly of the body of the 30S subunit.</text>
</comment>
<comment type="function">
    <text evidence="1">With S5 and S12 plays an important role in translational accuracy.</text>
</comment>
<comment type="subunit">
    <text evidence="1">Part of the 30S ribosomal subunit. Contacts protein S5. The interaction surface between S4 and S5 is involved in control of translational fidelity.</text>
</comment>
<comment type="similarity">
    <text evidence="1">Belongs to the universal ribosomal protein uS4 family.</text>
</comment>
<protein>
    <recommendedName>
        <fullName evidence="1">Small ribosomal subunit protein uS4</fullName>
    </recommendedName>
    <alternativeName>
        <fullName evidence="2">30S ribosomal protein S4</fullName>
    </alternativeName>
</protein>
<feature type="chain" id="PRO_1000165423" description="Small ribosomal subunit protein uS4">
    <location>
        <begin position="1"/>
        <end position="206"/>
    </location>
</feature>
<feature type="domain" description="S4 RNA-binding" evidence="1">
    <location>
        <begin position="96"/>
        <end position="156"/>
    </location>
</feature>
<evidence type="ECO:0000255" key="1">
    <source>
        <dbReference type="HAMAP-Rule" id="MF_01306"/>
    </source>
</evidence>
<evidence type="ECO:0000305" key="2"/>
<sequence length="206" mass="23439">MARYLGPKLKLSRREGTDLFLKSGVRAIDSKCKLETAPGQHGARKPRLSEYGTQLREKQKVRRIYGVLEKQFRNYYKDAARTKGNTGENLLQLLETRLDNVVYRMGFGATRAESRQLVSHKSIMVNGRVVNIPSFKVSANDVVSIREKSRTQARIKAALEVAAQREKPTWVEVDNAKMEGAFKRVPERSDLSAEINEQLIVELYSK</sequence>
<dbReference type="EMBL" id="CP001252">
    <property type="protein sequence ID" value="ACK48505.1"/>
    <property type="molecule type" value="Genomic_DNA"/>
</dbReference>
<dbReference type="RefSeq" id="WP_006083575.1">
    <property type="nucleotide sequence ID" value="NC_011663.1"/>
</dbReference>
<dbReference type="SMR" id="B8EBI1"/>
<dbReference type="GeneID" id="11770579"/>
<dbReference type="KEGG" id="sbp:Sbal223_4032"/>
<dbReference type="HOGENOM" id="CLU_092403_0_2_6"/>
<dbReference type="Proteomes" id="UP000002507">
    <property type="component" value="Chromosome"/>
</dbReference>
<dbReference type="GO" id="GO:0015935">
    <property type="term" value="C:small ribosomal subunit"/>
    <property type="evidence" value="ECO:0007669"/>
    <property type="project" value="InterPro"/>
</dbReference>
<dbReference type="GO" id="GO:0019843">
    <property type="term" value="F:rRNA binding"/>
    <property type="evidence" value="ECO:0007669"/>
    <property type="project" value="UniProtKB-UniRule"/>
</dbReference>
<dbReference type="GO" id="GO:0003735">
    <property type="term" value="F:structural constituent of ribosome"/>
    <property type="evidence" value="ECO:0007669"/>
    <property type="project" value="InterPro"/>
</dbReference>
<dbReference type="GO" id="GO:0042274">
    <property type="term" value="P:ribosomal small subunit biogenesis"/>
    <property type="evidence" value="ECO:0007669"/>
    <property type="project" value="TreeGrafter"/>
</dbReference>
<dbReference type="GO" id="GO:0006412">
    <property type="term" value="P:translation"/>
    <property type="evidence" value="ECO:0007669"/>
    <property type="project" value="UniProtKB-UniRule"/>
</dbReference>
<dbReference type="CDD" id="cd00165">
    <property type="entry name" value="S4"/>
    <property type="match status" value="1"/>
</dbReference>
<dbReference type="FunFam" id="1.10.1050.10:FF:000001">
    <property type="entry name" value="30S ribosomal protein S4"/>
    <property type="match status" value="1"/>
</dbReference>
<dbReference type="FunFam" id="3.10.290.10:FF:000001">
    <property type="entry name" value="30S ribosomal protein S4"/>
    <property type="match status" value="1"/>
</dbReference>
<dbReference type="Gene3D" id="1.10.1050.10">
    <property type="entry name" value="Ribosomal Protein S4 Delta 41, Chain A, domain 1"/>
    <property type="match status" value="1"/>
</dbReference>
<dbReference type="Gene3D" id="3.10.290.10">
    <property type="entry name" value="RNA-binding S4 domain"/>
    <property type="match status" value="1"/>
</dbReference>
<dbReference type="HAMAP" id="MF_01306_B">
    <property type="entry name" value="Ribosomal_uS4_B"/>
    <property type="match status" value="1"/>
</dbReference>
<dbReference type="InterPro" id="IPR022801">
    <property type="entry name" value="Ribosomal_uS4"/>
</dbReference>
<dbReference type="InterPro" id="IPR005709">
    <property type="entry name" value="Ribosomal_uS4_bac-type"/>
</dbReference>
<dbReference type="InterPro" id="IPR018079">
    <property type="entry name" value="Ribosomal_uS4_CS"/>
</dbReference>
<dbReference type="InterPro" id="IPR001912">
    <property type="entry name" value="Ribosomal_uS4_N"/>
</dbReference>
<dbReference type="InterPro" id="IPR002942">
    <property type="entry name" value="S4_RNA-bd"/>
</dbReference>
<dbReference type="InterPro" id="IPR036986">
    <property type="entry name" value="S4_RNA-bd_sf"/>
</dbReference>
<dbReference type="NCBIfam" id="NF003717">
    <property type="entry name" value="PRK05327.1"/>
    <property type="match status" value="1"/>
</dbReference>
<dbReference type="NCBIfam" id="TIGR01017">
    <property type="entry name" value="rpsD_bact"/>
    <property type="match status" value="1"/>
</dbReference>
<dbReference type="PANTHER" id="PTHR11831">
    <property type="entry name" value="30S 40S RIBOSOMAL PROTEIN"/>
    <property type="match status" value="1"/>
</dbReference>
<dbReference type="PANTHER" id="PTHR11831:SF4">
    <property type="entry name" value="SMALL RIBOSOMAL SUBUNIT PROTEIN US4M"/>
    <property type="match status" value="1"/>
</dbReference>
<dbReference type="Pfam" id="PF00163">
    <property type="entry name" value="Ribosomal_S4"/>
    <property type="match status" value="1"/>
</dbReference>
<dbReference type="Pfam" id="PF01479">
    <property type="entry name" value="S4"/>
    <property type="match status" value="1"/>
</dbReference>
<dbReference type="SMART" id="SM01390">
    <property type="entry name" value="Ribosomal_S4"/>
    <property type="match status" value="1"/>
</dbReference>
<dbReference type="SMART" id="SM00363">
    <property type="entry name" value="S4"/>
    <property type="match status" value="1"/>
</dbReference>
<dbReference type="SUPFAM" id="SSF55174">
    <property type="entry name" value="Alpha-L RNA-binding motif"/>
    <property type="match status" value="1"/>
</dbReference>
<dbReference type="PROSITE" id="PS00632">
    <property type="entry name" value="RIBOSOMAL_S4"/>
    <property type="match status" value="1"/>
</dbReference>
<dbReference type="PROSITE" id="PS50889">
    <property type="entry name" value="S4"/>
    <property type="match status" value="1"/>
</dbReference>
<organism>
    <name type="scientific">Shewanella baltica (strain OS223)</name>
    <dbReference type="NCBI Taxonomy" id="407976"/>
    <lineage>
        <taxon>Bacteria</taxon>
        <taxon>Pseudomonadati</taxon>
        <taxon>Pseudomonadota</taxon>
        <taxon>Gammaproteobacteria</taxon>
        <taxon>Alteromonadales</taxon>
        <taxon>Shewanellaceae</taxon>
        <taxon>Shewanella</taxon>
    </lineage>
</organism>
<name>RS4_SHEB2</name>
<gene>
    <name evidence="1" type="primary">rpsD</name>
    <name type="ordered locus">Sbal223_4032</name>
</gene>
<accession>B8EBI1</accession>
<keyword id="KW-0687">Ribonucleoprotein</keyword>
<keyword id="KW-0689">Ribosomal protein</keyword>
<keyword id="KW-0694">RNA-binding</keyword>
<keyword id="KW-0699">rRNA-binding</keyword>
<reference key="1">
    <citation type="submission" date="2008-12" db="EMBL/GenBank/DDBJ databases">
        <title>Complete sequence of chromosome of Shewanella baltica OS223.</title>
        <authorList>
            <consortium name="US DOE Joint Genome Institute"/>
            <person name="Lucas S."/>
            <person name="Copeland A."/>
            <person name="Lapidus A."/>
            <person name="Glavina del Rio T."/>
            <person name="Dalin E."/>
            <person name="Tice H."/>
            <person name="Bruce D."/>
            <person name="Goodwin L."/>
            <person name="Pitluck S."/>
            <person name="Chertkov O."/>
            <person name="Meincke L."/>
            <person name="Brettin T."/>
            <person name="Detter J.C."/>
            <person name="Han C."/>
            <person name="Kuske C.R."/>
            <person name="Larimer F."/>
            <person name="Land M."/>
            <person name="Hauser L."/>
            <person name="Kyrpides N."/>
            <person name="Ovchinnikova G."/>
            <person name="Brettar I."/>
            <person name="Rodrigues J."/>
            <person name="Konstantinidis K."/>
            <person name="Tiedje J."/>
        </authorList>
    </citation>
    <scope>NUCLEOTIDE SEQUENCE [LARGE SCALE GENOMIC DNA]</scope>
    <source>
        <strain>OS223</strain>
    </source>
</reference>
<proteinExistence type="inferred from homology"/>